<proteinExistence type="inferred from homology"/>
<gene>
    <name evidence="1" type="primary">aroB</name>
    <name type="ordered locus">HSM_1065</name>
</gene>
<evidence type="ECO:0000255" key="1">
    <source>
        <dbReference type="HAMAP-Rule" id="MF_00110"/>
    </source>
</evidence>
<sequence>MLCVNVELRERSYPIHIGMGLLSEPQVYPLKKGDKVMIVTNPTVAQYYLSSITDTLEKIGCSVENVQLPEGEQYKTLESLDLIFTALLKANHGRDTSIIALGGGVIGDIAGYAAASYQRGVRFIQIPTTLLAQVDSSVGGKTAVNHKLGKNMIGAFYQPCAVIIDTLTLTTLPKREIHAGLAEVIKYGAILDDEFFTWLEKHITNLVALEQQYLQQCIARCCQIKADVVTRDETEKGERALLNLGHTFGHAIETHLGYGNWLHGEAVATGMMIAAVLSNKLGDLSLNDVTRLEKLLTQADLPTASPDTMKAEDYLPHMMRDKKVLAGKLRLVLLKSLGQAYVATDTDKEYVLDAIRTCSKKS</sequence>
<dbReference type="EC" id="4.2.3.4" evidence="1"/>
<dbReference type="EMBL" id="CP000947">
    <property type="protein sequence ID" value="ACA30780.1"/>
    <property type="molecule type" value="Genomic_DNA"/>
</dbReference>
<dbReference type="RefSeq" id="WP_012340253.1">
    <property type="nucleotide sequence ID" value="NC_010519.1"/>
</dbReference>
<dbReference type="SMR" id="B0UTE6"/>
<dbReference type="STRING" id="228400.HSM_1065"/>
<dbReference type="GeneID" id="31487365"/>
<dbReference type="KEGG" id="hsm:HSM_1065"/>
<dbReference type="HOGENOM" id="CLU_001201_0_2_6"/>
<dbReference type="UniPathway" id="UPA00053">
    <property type="reaction ID" value="UER00085"/>
</dbReference>
<dbReference type="GO" id="GO:0005737">
    <property type="term" value="C:cytoplasm"/>
    <property type="evidence" value="ECO:0007669"/>
    <property type="project" value="UniProtKB-SubCell"/>
</dbReference>
<dbReference type="GO" id="GO:0003856">
    <property type="term" value="F:3-dehydroquinate synthase activity"/>
    <property type="evidence" value="ECO:0007669"/>
    <property type="project" value="UniProtKB-UniRule"/>
</dbReference>
<dbReference type="GO" id="GO:0046872">
    <property type="term" value="F:metal ion binding"/>
    <property type="evidence" value="ECO:0007669"/>
    <property type="project" value="UniProtKB-KW"/>
</dbReference>
<dbReference type="GO" id="GO:0000166">
    <property type="term" value="F:nucleotide binding"/>
    <property type="evidence" value="ECO:0007669"/>
    <property type="project" value="UniProtKB-KW"/>
</dbReference>
<dbReference type="GO" id="GO:0008652">
    <property type="term" value="P:amino acid biosynthetic process"/>
    <property type="evidence" value="ECO:0007669"/>
    <property type="project" value="UniProtKB-KW"/>
</dbReference>
<dbReference type="GO" id="GO:0009073">
    <property type="term" value="P:aromatic amino acid family biosynthetic process"/>
    <property type="evidence" value="ECO:0007669"/>
    <property type="project" value="UniProtKB-KW"/>
</dbReference>
<dbReference type="GO" id="GO:0009423">
    <property type="term" value="P:chorismate biosynthetic process"/>
    <property type="evidence" value="ECO:0007669"/>
    <property type="project" value="UniProtKB-UniRule"/>
</dbReference>
<dbReference type="CDD" id="cd08195">
    <property type="entry name" value="DHQS"/>
    <property type="match status" value="1"/>
</dbReference>
<dbReference type="FunFam" id="1.20.1090.10:FF:000002">
    <property type="entry name" value="3-dehydroquinate synthase"/>
    <property type="match status" value="1"/>
</dbReference>
<dbReference type="FunFam" id="3.40.50.1970:FF:000001">
    <property type="entry name" value="3-dehydroquinate synthase"/>
    <property type="match status" value="1"/>
</dbReference>
<dbReference type="Gene3D" id="3.40.50.1970">
    <property type="match status" value="1"/>
</dbReference>
<dbReference type="Gene3D" id="1.20.1090.10">
    <property type="entry name" value="Dehydroquinate synthase-like - alpha domain"/>
    <property type="match status" value="1"/>
</dbReference>
<dbReference type="HAMAP" id="MF_00110">
    <property type="entry name" value="DHQ_synthase"/>
    <property type="match status" value="1"/>
</dbReference>
<dbReference type="InterPro" id="IPR050071">
    <property type="entry name" value="Dehydroquinate_synthase"/>
</dbReference>
<dbReference type="InterPro" id="IPR016037">
    <property type="entry name" value="DHQ_synth_AroB"/>
</dbReference>
<dbReference type="InterPro" id="IPR030963">
    <property type="entry name" value="DHQ_synth_fam"/>
</dbReference>
<dbReference type="InterPro" id="IPR030960">
    <property type="entry name" value="DHQS/DOIS_N"/>
</dbReference>
<dbReference type="InterPro" id="IPR056179">
    <property type="entry name" value="DHQS_C"/>
</dbReference>
<dbReference type="NCBIfam" id="TIGR01357">
    <property type="entry name" value="aroB"/>
    <property type="match status" value="1"/>
</dbReference>
<dbReference type="PANTHER" id="PTHR43622">
    <property type="entry name" value="3-DEHYDROQUINATE SYNTHASE"/>
    <property type="match status" value="1"/>
</dbReference>
<dbReference type="PANTHER" id="PTHR43622:SF7">
    <property type="entry name" value="3-DEHYDROQUINATE SYNTHASE, CHLOROPLASTIC"/>
    <property type="match status" value="1"/>
</dbReference>
<dbReference type="Pfam" id="PF01761">
    <property type="entry name" value="DHQ_synthase"/>
    <property type="match status" value="1"/>
</dbReference>
<dbReference type="Pfam" id="PF24621">
    <property type="entry name" value="DHQS_C"/>
    <property type="match status" value="1"/>
</dbReference>
<dbReference type="PIRSF" id="PIRSF001455">
    <property type="entry name" value="DHQ_synth"/>
    <property type="match status" value="1"/>
</dbReference>
<dbReference type="SUPFAM" id="SSF56796">
    <property type="entry name" value="Dehydroquinate synthase-like"/>
    <property type="match status" value="1"/>
</dbReference>
<organism>
    <name type="scientific">Histophilus somni (strain 2336)</name>
    <name type="common">Haemophilus somnus</name>
    <dbReference type="NCBI Taxonomy" id="228400"/>
    <lineage>
        <taxon>Bacteria</taxon>
        <taxon>Pseudomonadati</taxon>
        <taxon>Pseudomonadota</taxon>
        <taxon>Gammaproteobacteria</taxon>
        <taxon>Pasteurellales</taxon>
        <taxon>Pasteurellaceae</taxon>
        <taxon>Histophilus</taxon>
    </lineage>
</organism>
<name>AROB_HISS2</name>
<reference key="1">
    <citation type="submission" date="2008-02" db="EMBL/GenBank/DDBJ databases">
        <title>Complete sequence of Haemophilus somnus 2336.</title>
        <authorList>
            <consortium name="US DOE Joint Genome Institute"/>
            <person name="Siddaramappa S."/>
            <person name="Duncan A.J."/>
            <person name="Challacombe J.F."/>
            <person name="Rainey D."/>
            <person name="Gillaspy A.F."/>
            <person name="Carson M."/>
            <person name="Gipson J."/>
            <person name="Gipson M."/>
            <person name="Bruce D."/>
            <person name="Detter J.C."/>
            <person name="Han C.S."/>
            <person name="Land M."/>
            <person name="Tapia R."/>
            <person name="Thompson L.S."/>
            <person name="Orvis J."/>
            <person name="Zaitshik J."/>
            <person name="Barnes G."/>
            <person name="Brettin T.S."/>
            <person name="Dyer D.W."/>
            <person name="Inzana T.J."/>
        </authorList>
    </citation>
    <scope>NUCLEOTIDE SEQUENCE [LARGE SCALE GENOMIC DNA]</scope>
    <source>
        <strain>2336</strain>
    </source>
</reference>
<keyword id="KW-0028">Amino-acid biosynthesis</keyword>
<keyword id="KW-0057">Aromatic amino acid biosynthesis</keyword>
<keyword id="KW-0170">Cobalt</keyword>
<keyword id="KW-0963">Cytoplasm</keyword>
<keyword id="KW-0456">Lyase</keyword>
<keyword id="KW-0479">Metal-binding</keyword>
<keyword id="KW-0520">NAD</keyword>
<keyword id="KW-0547">Nucleotide-binding</keyword>
<keyword id="KW-0862">Zinc</keyword>
<protein>
    <recommendedName>
        <fullName evidence="1">3-dehydroquinate synthase</fullName>
        <shortName evidence="1">DHQS</shortName>
        <ecNumber evidence="1">4.2.3.4</ecNumber>
    </recommendedName>
</protein>
<accession>B0UTE6</accession>
<comment type="function">
    <text evidence="1">Catalyzes the conversion of 3-deoxy-D-arabino-heptulosonate 7-phosphate (DAHP) to dehydroquinate (DHQ).</text>
</comment>
<comment type="catalytic activity">
    <reaction evidence="1">
        <text>7-phospho-2-dehydro-3-deoxy-D-arabino-heptonate = 3-dehydroquinate + phosphate</text>
        <dbReference type="Rhea" id="RHEA:21968"/>
        <dbReference type="ChEBI" id="CHEBI:32364"/>
        <dbReference type="ChEBI" id="CHEBI:43474"/>
        <dbReference type="ChEBI" id="CHEBI:58394"/>
        <dbReference type="EC" id="4.2.3.4"/>
    </reaction>
</comment>
<comment type="cofactor">
    <cofactor evidence="1">
        <name>Co(2+)</name>
        <dbReference type="ChEBI" id="CHEBI:48828"/>
    </cofactor>
    <cofactor evidence="1">
        <name>Zn(2+)</name>
        <dbReference type="ChEBI" id="CHEBI:29105"/>
    </cofactor>
    <text evidence="1">Binds 1 divalent metal cation per subunit. Can use either Co(2+) or Zn(2+).</text>
</comment>
<comment type="cofactor">
    <cofactor evidence="1">
        <name>NAD(+)</name>
        <dbReference type="ChEBI" id="CHEBI:57540"/>
    </cofactor>
</comment>
<comment type="pathway">
    <text evidence="1">Metabolic intermediate biosynthesis; chorismate biosynthesis; chorismate from D-erythrose 4-phosphate and phosphoenolpyruvate: step 2/7.</text>
</comment>
<comment type="subcellular location">
    <subcellularLocation>
        <location evidence="1">Cytoplasm</location>
    </subcellularLocation>
</comment>
<comment type="similarity">
    <text evidence="1">Belongs to the sugar phosphate cyclases superfamily. Dehydroquinate synthase family.</text>
</comment>
<feature type="chain" id="PRO_1000094529" description="3-dehydroquinate synthase">
    <location>
        <begin position="1"/>
        <end position="362"/>
    </location>
</feature>
<feature type="binding site" evidence="1">
    <location>
        <begin position="70"/>
        <end position="75"/>
    </location>
    <ligand>
        <name>NAD(+)</name>
        <dbReference type="ChEBI" id="CHEBI:57540"/>
    </ligand>
</feature>
<feature type="binding site" evidence="1">
    <location>
        <begin position="104"/>
        <end position="108"/>
    </location>
    <ligand>
        <name>NAD(+)</name>
        <dbReference type="ChEBI" id="CHEBI:57540"/>
    </ligand>
</feature>
<feature type="binding site" evidence="1">
    <location>
        <begin position="128"/>
        <end position="129"/>
    </location>
    <ligand>
        <name>NAD(+)</name>
        <dbReference type="ChEBI" id="CHEBI:57540"/>
    </ligand>
</feature>
<feature type="binding site" evidence="1">
    <location>
        <position position="141"/>
    </location>
    <ligand>
        <name>NAD(+)</name>
        <dbReference type="ChEBI" id="CHEBI:57540"/>
    </ligand>
</feature>
<feature type="binding site" evidence="1">
    <location>
        <position position="150"/>
    </location>
    <ligand>
        <name>NAD(+)</name>
        <dbReference type="ChEBI" id="CHEBI:57540"/>
    </ligand>
</feature>
<feature type="binding site" evidence="1">
    <location>
        <begin position="168"/>
        <end position="171"/>
    </location>
    <ligand>
        <name>NAD(+)</name>
        <dbReference type="ChEBI" id="CHEBI:57540"/>
    </ligand>
</feature>
<feature type="binding site" evidence="1">
    <location>
        <position position="183"/>
    </location>
    <ligand>
        <name>Zn(2+)</name>
        <dbReference type="ChEBI" id="CHEBI:29105"/>
    </ligand>
</feature>
<feature type="binding site" evidence="1">
    <location>
        <position position="246"/>
    </location>
    <ligand>
        <name>Zn(2+)</name>
        <dbReference type="ChEBI" id="CHEBI:29105"/>
    </ligand>
</feature>
<feature type="binding site" evidence="1">
    <location>
        <position position="263"/>
    </location>
    <ligand>
        <name>Zn(2+)</name>
        <dbReference type="ChEBI" id="CHEBI:29105"/>
    </ligand>
</feature>